<feature type="chain" id="PRO_0000277513" description="Ribose import ATP-binding protein RbsA 1">
    <location>
        <begin position="1"/>
        <end position="517"/>
    </location>
</feature>
<feature type="domain" description="ABC transporter 1" evidence="1">
    <location>
        <begin position="11"/>
        <end position="251"/>
    </location>
</feature>
<feature type="domain" description="ABC transporter 2" evidence="1">
    <location>
        <begin position="263"/>
        <end position="507"/>
    </location>
</feature>
<feature type="binding site" evidence="1">
    <location>
        <begin position="43"/>
        <end position="50"/>
    </location>
    <ligand>
        <name>ATP</name>
        <dbReference type="ChEBI" id="CHEBI:30616"/>
    </ligand>
</feature>
<organism>
    <name type="scientific">Burkholderia ambifaria (strain ATCC BAA-244 / DSM 16087 / CCUG 44356 / LMG 19182 / AMMD)</name>
    <name type="common">Burkholderia cepacia (strain AMMD)</name>
    <dbReference type="NCBI Taxonomy" id="339670"/>
    <lineage>
        <taxon>Bacteria</taxon>
        <taxon>Pseudomonadati</taxon>
        <taxon>Pseudomonadota</taxon>
        <taxon>Betaproteobacteria</taxon>
        <taxon>Burkholderiales</taxon>
        <taxon>Burkholderiaceae</taxon>
        <taxon>Burkholderia</taxon>
        <taxon>Burkholderia cepacia complex</taxon>
    </lineage>
</organism>
<name>RBSA1_BURCM</name>
<keyword id="KW-0067">ATP-binding</keyword>
<keyword id="KW-0997">Cell inner membrane</keyword>
<keyword id="KW-1003">Cell membrane</keyword>
<keyword id="KW-0472">Membrane</keyword>
<keyword id="KW-0547">Nucleotide-binding</keyword>
<keyword id="KW-0677">Repeat</keyword>
<keyword id="KW-0762">Sugar transport</keyword>
<keyword id="KW-1278">Translocase</keyword>
<keyword id="KW-0813">Transport</keyword>
<dbReference type="EC" id="7.5.2.7" evidence="1"/>
<dbReference type="EMBL" id="CP000440">
    <property type="protein sequence ID" value="ABI86983.1"/>
    <property type="molecule type" value="Genomic_DNA"/>
</dbReference>
<dbReference type="RefSeq" id="WP_011656728.1">
    <property type="nucleotide sequence ID" value="NC_008390.1"/>
</dbReference>
<dbReference type="SMR" id="Q0BFU0"/>
<dbReference type="GeneID" id="93083174"/>
<dbReference type="KEGG" id="bam:Bamb_1425"/>
<dbReference type="PATRIC" id="fig|339670.21.peg.115"/>
<dbReference type="eggNOG" id="COG1129">
    <property type="taxonomic scope" value="Bacteria"/>
</dbReference>
<dbReference type="Proteomes" id="UP000000662">
    <property type="component" value="Chromosome 1"/>
</dbReference>
<dbReference type="GO" id="GO:0005886">
    <property type="term" value="C:plasma membrane"/>
    <property type="evidence" value="ECO:0007669"/>
    <property type="project" value="UniProtKB-SubCell"/>
</dbReference>
<dbReference type="GO" id="GO:0015611">
    <property type="term" value="F:ABC-type D-ribose transporter activity"/>
    <property type="evidence" value="ECO:0007669"/>
    <property type="project" value="UniProtKB-EC"/>
</dbReference>
<dbReference type="GO" id="GO:0005524">
    <property type="term" value="F:ATP binding"/>
    <property type="evidence" value="ECO:0007669"/>
    <property type="project" value="UniProtKB-KW"/>
</dbReference>
<dbReference type="GO" id="GO:0016887">
    <property type="term" value="F:ATP hydrolysis activity"/>
    <property type="evidence" value="ECO:0007669"/>
    <property type="project" value="InterPro"/>
</dbReference>
<dbReference type="CDD" id="cd03216">
    <property type="entry name" value="ABC_Carb_Monos_I"/>
    <property type="match status" value="1"/>
</dbReference>
<dbReference type="CDD" id="cd03215">
    <property type="entry name" value="ABC_Carb_Monos_II"/>
    <property type="match status" value="1"/>
</dbReference>
<dbReference type="FunFam" id="3.40.50.300:FF:000127">
    <property type="entry name" value="Ribose import ATP-binding protein RbsA"/>
    <property type="match status" value="1"/>
</dbReference>
<dbReference type="Gene3D" id="3.40.50.300">
    <property type="entry name" value="P-loop containing nucleotide triphosphate hydrolases"/>
    <property type="match status" value="2"/>
</dbReference>
<dbReference type="InterPro" id="IPR003593">
    <property type="entry name" value="AAA+_ATPase"/>
</dbReference>
<dbReference type="InterPro" id="IPR050107">
    <property type="entry name" value="ABC_carbohydrate_import_ATPase"/>
</dbReference>
<dbReference type="InterPro" id="IPR003439">
    <property type="entry name" value="ABC_transporter-like_ATP-bd"/>
</dbReference>
<dbReference type="InterPro" id="IPR017871">
    <property type="entry name" value="ABC_transporter-like_CS"/>
</dbReference>
<dbReference type="InterPro" id="IPR027417">
    <property type="entry name" value="P-loop_NTPase"/>
</dbReference>
<dbReference type="PANTHER" id="PTHR43790">
    <property type="entry name" value="CARBOHYDRATE TRANSPORT ATP-BINDING PROTEIN MG119-RELATED"/>
    <property type="match status" value="1"/>
</dbReference>
<dbReference type="PANTHER" id="PTHR43790:SF3">
    <property type="entry name" value="D-ALLOSE IMPORT ATP-BINDING PROTEIN ALSA-RELATED"/>
    <property type="match status" value="1"/>
</dbReference>
<dbReference type="Pfam" id="PF00005">
    <property type="entry name" value="ABC_tran"/>
    <property type="match status" value="2"/>
</dbReference>
<dbReference type="SMART" id="SM00382">
    <property type="entry name" value="AAA"/>
    <property type="match status" value="2"/>
</dbReference>
<dbReference type="SUPFAM" id="SSF52540">
    <property type="entry name" value="P-loop containing nucleoside triphosphate hydrolases"/>
    <property type="match status" value="2"/>
</dbReference>
<dbReference type="PROSITE" id="PS00211">
    <property type="entry name" value="ABC_TRANSPORTER_1"/>
    <property type="match status" value="1"/>
</dbReference>
<dbReference type="PROSITE" id="PS50893">
    <property type="entry name" value="ABC_TRANSPORTER_2"/>
    <property type="match status" value="2"/>
</dbReference>
<dbReference type="PROSITE" id="PS51254">
    <property type="entry name" value="RBSA"/>
    <property type="match status" value="1"/>
</dbReference>
<gene>
    <name evidence="1" type="primary">rbsA1</name>
    <name type="ordered locus">Bamb_1425</name>
</gene>
<proteinExistence type="inferred from homology"/>
<reference key="1">
    <citation type="submission" date="2006-08" db="EMBL/GenBank/DDBJ databases">
        <title>Complete sequence of chromosome 1 of Burkholderia cepacia AMMD.</title>
        <authorList>
            <person name="Copeland A."/>
            <person name="Lucas S."/>
            <person name="Lapidus A."/>
            <person name="Barry K."/>
            <person name="Detter J.C."/>
            <person name="Glavina del Rio T."/>
            <person name="Hammon N."/>
            <person name="Israni S."/>
            <person name="Pitluck S."/>
            <person name="Bruce D."/>
            <person name="Chain P."/>
            <person name="Malfatti S."/>
            <person name="Shin M."/>
            <person name="Vergez L."/>
            <person name="Schmutz J."/>
            <person name="Larimer F."/>
            <person name="Land M."/>
            <person name="Hauser L."/>
            <person name="Kyrpides N."/>
            <person name="Kim E."/>
            <person name="Parke J."/>
            <person name="Coenye T."/>
            <person name="Konstantinidis K."/>
            <person name="Ramette A."/>
            <person name="Tiedje J."/>
            <person name="Richardson P."/>
        </authorList>
    </citation>
    <scope>NUCLEOTIDE SEQUENCE [LARGE SCALE GENOMIC DNA]</scope>
    <source>
        <strain>ATCC BAA-244 / DSM 16087 / CCUG 44356 / LMG 19182 / AMMD</strain>
    </source>
</reference>
<sequence length="517" mass="55910">MSRSESSRPLLEMRRISKTFPAVRALDNVSLTVYPGEIHSLMGENGAGKSTLMKILSGAYRADAGGEILIDGERIDVDGPLAARDAGVAVIYQELCLAPNLTVAENIYVGRELRRGNRRWGTIDRAAMARGCEDVLARLGAPFGPDTLVGTLSIAEQQLVEIARAVHTRARILVMDEPTTPLSSRETEHLFGLIRQLREEGLAIIYISHRMAEIYELSDRVSVLRDGSYVGTLERESLSAERLVAMMVGRDISGFYKKEHAPYDPGHLLLSVRDIADAERVRGCSLDLHAGEVLGIAGLVGAGRTELARLIFGAEPRTRGDVKLGDRAFGAHSPRDAIDAGLVYLTEDRKRQGLFLDMSVRDNINISVCNRDARLGALDLARGAQRARDAIASLSIRVPNANVNVGALSGGNQQKVLLSRLLETKPRVLILDEPTRGVDIGAKSEIYRIINELARAGVGVIVISSELPEIIGVADRVLVMREGEIAGELGGHTHTPITQEAIIALATGSQAELADAH</sequence>
<comment type="function">
    <text evidence="1">Part of the ABC transporter complex RbsABC involved in ribose import. Responsible for energy coupling to the transport system.</text>
</comment>
<comment type="catalytic activity">
    <reaction evidence="1">
        <text>D-ribose(out) + ATP + H2O = D-ribose(in) + ADP + phosphate + H(+)</text>
        <dbReference type="Rhea" id="RHEA:29903"/>
        <dbReference type="ChEBI" id="CHEBI:15377"/>
        <dbReference type="ChEBI" id="CHEBI:15378"/>
        <dbReference type="ChEBI" id="CHEBI:30616"/>
        <dbReference type="ChEBI" id="CHEBI:43474"/>
        <dbReference type="ChEBI" id="CHEBI:47013"/>
        <dbReference type="ChEBI" id="CHEBI:456216"/>
        <dbReference type="EC" id="7.5.2.7"/>
    </reaction>
</comment>
<comment type="subunit">
    <text evidence="1">The complex is composed of an ATP-binding protein (RbsA), two transmembrane proteins (RbsC) and a solute-binding protein (RbsB).</text>
</comment>
<comment type="subcellular location">
    <subcellularLocation>
        <location evidence="1">Cell inner membrane</location>
        <topology evidence="1">Peripheral membrane protein</topology>
    </subcellularLocation>
</comment>
<comment type="similarity">
    <text evidence="1">Belongs to the ABC transporter superfamily. Ribose importer (TC 3.A.1.2.1) family.</text>
</comment>
<evidence type="ECO:0000255" key="1">
    <source>
        <dbReference type="HAMAP-Rule" id="MF_01716"/>
    </source>
</evidence>
<protein>
    <recommendedName>
        <fullName evidence="1">Ribose import ATP-binding protein RbsA 1</fullName>
        <ecNumber evidence="1">7.5.2.7</ecNumber>
    </recommendedName>
</protein>
<accession>Q0BFU0</accession>